<organism>
    <name type="scientific">Escherichia coli O45:K1 (strain S88 / ExPEC)</name>
    <dbReference type="NCBI Taxonomy" id="585035"/>
    <lineage>
        <taxon>Bacteria</taxon>
        <taxon>Pseudomonadati</taxon>
        <taxon>Pseudomonadota</taxon>
        <taxon>Gammaproteobacteria</taxon>
        <taxon>Enterobacterales</taxon>
        <taxon>Enterobacteriaceae</taxon>
        <taxon>Escherichia</taxon>
    </lineage>
</organism>
<reference key="1">
    <citation type="journal article" date="2009" name="PLoS Genet.">
        <title>Organised genome dynamics in the Escherichia coli species results in highly diverse adaptive paths.</title>
        <authorList>
            <person name="Touchon M."/>
            <person name="Hoede C."/>
            <person name="Tenaillon O."/>
            <person name="Barbe V."/>
            <person name="Baeriswyl S."/>
            <person name="Bidet P."/>
            <person name="Bingen E."/>
            <person name="Bonacorsi S."/>
            <person name="Bouchier C."/>
            <person name="Bouvet O."/>
            <person name="Calteau A."/>
            <person name="Chiapello H."/>
            <person name="Clermont O."/>
            <person name="Cruveiller S."/>
            <person name="Danchin A."/>
            <person name="Diard M."/>
            <person name="Dossat C."/>
            <person name="Karoui M.E."/>
            <person name="Frapy E."/>
            <person name="Garry L."/>
            <person name="Ghigo J.M."/>
            <person name="Gilles A.M."/>
            <person name="Johnson J."/>
            <person name="Le Bouguenec C."/>
            <person name="Lescat M."/>
            <person name="Mangenot S."/>
            <person name="Martinez-Jehanne V."/>
            <person name="Matic I."/>
            <person name="Nassif X."/>
            <person name="Oztas S."/>
            <person name="Petit M.A."/>
            <person name="Pichon C."/>
            <person name="Rouy Z."/>
            <person name="Ruf C.S."/>
            <person name="Schneider D."/>
            <person name="Tourret J."/>
            <person name="Vacherie B."/>
            <person name="Vallenet D."/>
            <person name="Medigue C."/>
            <person name="Rocha E.P.C."/>
            <person name="Denamur E."/>
        </authorList>
    </citation>
    <scope>NUCLEOTIDE SEQUENCE [LARGE SCALE GENOMIC DNA]</scope>
    <source>
        <strain>S88 / ExPEC</strain>
    </source>
</reference>
<evidence type="ECO:0000255" key="1">
    <source>
        <dbReference type="HAMAP-Rule" id="MF_00514"/>
    </source>
</evidence>
<evidence type="ECO:0000256" key="2">
    <source>
        <dbReference type="SAM" id="MobiDB-lite"/>
    </source>
</evidence>
<evidence type="ECO:0000305" key="3"/>
<comment type="similarity">
    <text evidence="1">Belongs to the bacterial ribosomal protein bL35 family.</text>
</comment>
<sequence length="65" mass="7289">MPKIKTVRGAAKRFKKTGKGGFKHKHANLRHILTKKATKRKRHLRPKAMVSKGDLGLVIACLPYA</sequence>
<feature type="chain" id="PRO_1000127343" description="Large ribosomal subunit protein bL35">
    <location>
        <begin position="1"/>
        <end position="65"/>
    </location>
</feature>
<feature type="region of interest" description="Disordered" evidence="2">
    <location>
        <begin position="1"/>
        <end position="22"/>
    </location>
</feature>
<feature type="compositionally biased region" description="Basic residues" evidence="2">
    <location>
        <begin position="10"/>
        <end position="22"/>
    </location>
</feature>
<name>RL35_ECO45</name>
<protein>
    <recommendedName>
        <fullName evidence="1">Large ribosomal subunit protein bL35</fullName>
    </recommendedName>
    <alternativeName>
        <fullName evidence="3">50S ribosomal protein L35</fullName>
    </alternativeName>
</protein>
<dbReference type="EMBL" id="CU928161">
    <property type="protein sequence ID" value="CAR03076.1"/>
    <property type="molecule type" value="Genomic_DNA"/>
</dbReference>
<dbReference type="RefSeq" id="WP_001124225.1">
    <property type="nucleotide sequence ID" value="NC_011742.1"/>
</dbReference>
<dbReference type="EMDB" id="EMD-7970"/>
<dbReference type="EMDB" id="EMD-8826"/>
<dbReference type="EMDB" id="EMD-8829"/>
<dbReference type="SMR" id="B7MAS7"/>
<dbReference type="IntAct" id="B7MAS7">
    <property type="interactions" value="1"/>
</dbReference>
<dbReference type="GeneID" id="97601348"/>
<dbReference type="KEGG" id="ecz:ECS88_1767"/>
<dbReference type="HOGENOM" id="CLU_169643_1_1_6"/>
<dbReference type="Proteomes" id="UP000000747">
    <property type="component" value="Chromosome"/>
</dbReference>
<dbReference type="GO" id="GO:0022625">
    <property type="term" value="C:cytosolic large ribosomal subunit"/>
    <property type="evidence" value="ECO:0007669"/>
    <property type="project" value="TreeGrafter"/>
</dbReference>
<dbReference type="GO" id="GO:0003735">
    <property type="term" value="F:structural constituent of ribosome"/>
    <property type="evidence" value="ECO:0007669"/>
    <property type="project" value="InterPro"/>
</dbReference>
<dbReference type="GO" id="GO:0006412">
    <property type="term" value="P:translation"/>
    <property type="evidence" value="ECO:0007669"/>
    <property type="project" value="UniProtKB-UniRule"/>
</dbReference>
<dbReference type="FunFam" id="4.10.410.60:FF:000001">
    <property type="entry name" value="50S ribosomal protein L35"/>
    <property type="match status" value="1"/>
</dbReference>
<dbReference type="Gene3D" id="4.10.410.60">
    <property type="match status" value="1"/>
</dbReference>
<dbReference type="HAMAP" id="MF_00514">
    <property type="entry name" value="Ribosomal_bL35"/>
    <property type="match status" value="1"/>
</dbReference>
<dbReference type="InterPro" id="IPR001706">
    <property type="entry name" value="Ribosomal_bL35"/>
</dbReference>
<dbReference type="InterPro" id="IPR021137">
    <property type="entry name" value="Ribosomal_bL35-like"/>
</dbReference>
<dbReference type="InterPro" id="IPR018265">
    <property type="entry name" value="Ribosomal_bL35_CS"/>
</dbReference>
<dbReference type="InterPro" id="IPR037229">
    <property type="entry name" value="Ribosomal_bL35_sf"/>
</dbReference>
<dbReference type="NCBIfam" id="TIGR00001">
    <property type="entry name" value="rpmI_bact"/>
    <property type="match status" value="1"/>
</dbReference>
<dbReference type="PANTHER" id="PTHR33343">
    <property type="entry name" value="54S RIBOSOMAL PROTEIN BL35M"/>
    <property type="match status" value="1"/>
</dbReference>
<dbReference type="PANTHER" id="PTHR33343:SF1">
    <property type="entry name" value="LARGE RIBOSOMAL SUBUNIT PROTEIN BL35M"/>
    <property type="match status" value="1"/>
</dbReference>
<dbReference type="Pfam" id="PF01632">
    <property type="entry name" value="Ribosomal_L35p"/>
    <property type="match status" value="1"/>
</dbReference>
<dbReference type="PRINTS" id="PR00064">
    <property type="entry name" value="RIBOSOMALL35"/>
</dbReference>
<dbReference type="SUPFAM" id="SSF143034">
    <property type="entry name" value="L35p-like"/>
    <property type="match status" value="1"/>
</dbReference>
<dbReference type="PROSITE" id="PS00936">
    <property type="entry name" value="RIBOSOMAL_L35"/>
    <property type="match status" value="1"/>
</dbReference>
<gene>
    <name evidence="1" type="primary">rpmI</name>
    <name type="ordered locus">ECS88_1767</name>
</gene>
<keyword id="KW-1185">Reference proteome</keyword>
<keyword id="KW-0687">Ribonucleoprotein</keyword>
<keyword id="KW-0689">Ribosomal protein</keyword>
<proteinExistence type="inferred from homology"/>
<accession>B7MAS7</accession>